<gene>
    <name evidence="1" type="primary">dapA</name>
    <name type="ordered locus">Swit_0517</name>
</gene>
<sequence length="291" mass="30668">MFSGSIPALVTPFRDGAFDEKLFRGFVDWQIAEGSSALVPCGTTGESATMSIEEHNHVVRVCIEQAQGRVPVIAGCGSNDTAVALEHMKAAQAAGADAALVVLPYYNRPNQDGLIAHFRHLTDNCTLPIIVYNVPARTVTDILPETLGALAGIKTIVGIKDASGKVERVSAQRQHCGPDFCQLSGNDDMALGFMAMGGVGCISVTANVAPGLCAEFQTACADGRWADALALQDKLFPLHAALFSDASPGPVKYALTRTYRDFPADLRLPMTWPSEASRAAVDAALAHAGIA</sequence>
<protein>
    <recommendedName>
        <fullName evidence="1">4-hydroxy-tetrahydrodipicolinate synthase</fullName>
        <shortName evidence="1">HTPA synthase</shortName>
        <ecNumber evidence="1">4.3.3.7</ecNumber>
    </recommendedName>
</protein>
<accession>A5V3L9</accession>
<proteinExistence type="inferred from homology"/>
<reference key="1">
    <citation type="journal article" date="2010" name="J. Bacteriol.">
        <title>Genome sequence of the dioxin-mineralizing bacterium Sphingomonas wittichii RW1.</title>
        <authorList>
            <person name="Miller T.R."/>
            <person name="Delcher A.L."/>
            <person name="Salzberg S.L."/>
            <person name="Saunders E."/>
            <person name="Detter J.C."/>
            <person name="Halden R.U."/>
        </authorList>
    </citation>
    <scope>NUCLEOTIDE SEQUENCE [LARGE SCALE GENOMIC DNA]</scope>
    <source>
        <strain>DSM 6014 / CCUG 31198 / JCM 15750 / NBRC 105917 / EY 4224 / RW1</strain>
    </source>
</reference>
<evidence type="ECO:0000255" key="1">
    <source>
        <dbReference type="HAMAP-Rule" id="MF_00418"/>
    </source>
</evidence>
<evidence type="ECO:0000305" key="2"/>
<comment type="function">
    <text evidence="1">Catalyzes the condensation of (S)-aspartate-beta-semialdehyde [(S)-ASA] and pyruvate to 4-hydroxy-tetrahydrodipicolinate (HTPA).</text>
</comment>
<comment type="catalytic activity">
    <reaction evidence="1">
        <text>L-aspartate 4-semialdehyde + pyruvate = (2S,4S)-4-hydroxy-2,3,4,5-tetrahydrodipicolinate + H2O + H(+)</text>
        <dbReference type="Rhea" id="RHEA:34171"/>
        <dbReference type="ChEBI" id="CHEBI:15361"/>
        <dbReference type="ChEBI" id="CHEBI:15377"/>
        <dbReference type="ChEBI" id="CHEBI:15378"/>
        <dbReference type="ChEBI" id="CHEBI:67139"/>
        <dbReference type="ChEBI" id="CHEBI:537519"/>
        <dbReference type="EC" id="4.3.3.7"/>
    </reaction>
</comment>
<comment type="pathway">
    <text evidence="1">Amino-acid biosynthesis; L-lysine biosynthesis via DAP pathway; (S)-tetrahydrodipicolinate from L-aspartate: step 3/4.</text>
</comment>
<comment type="subunit">
    <text evidence="1">Homotetramer; dimer of dimers.</text>
</comment>
<comment type="subcellular location">
    <subcellularLocation>
        <location evidence="1">Cytoplasm</location>
    </subcellularLocation>
</comment>
<comment type="similarity">
    <text evidence="1">Belongs to the DapA family.</text>
</comment>
<comment type="caution">
    <text evidence="2">Was originally thought to be a dihydrodipicolinate synthase (DHDPS), catalyzing the condensation of (S)-aspartate-beta-semialdehyde [(S)-ASA] and pyruvate to dihydrodipicolinate (DHDP). However, it was shown in E.coli that the product of the enzymatic reaction is not dihydrodipicolinate but in fact (4S)-4-hydroxy-2,3,4,5-tetrahydro-(2S)-dipicolinic acid (HTPA), and that the consecutive dehydration reaction leading to DHDP is not spontaneous but catalyzed by DapB.</text>
</comment>
<comment type="sequence caution" evidence="2">
    <conflict type="erroneous initiation">
        <sequence resource="EMBL-CDS" id="ABQ66885"/>
    </conflict>
</comment>
<name>DAPA_RHIWR</name>
<keyword id="KW-0028">Amino-acid biosynthesis</keyword>
<keyword id="KW-0963">Cytoplasm</keyword>
<keyword id="KW-0220">Diaminopimelate biosynthesis</keyword>
<keyword id="KW-0456">Lyase</keyword>
<keyword id="KW-0457">Lysine biosynthesis</keyword>
<keyword id="KW-1185">Reference proteome</keyword>
<keyword id="KW-0704">Schiff base</keyword>
<organism>
    <name type="scientific">Rhizorhabdus wittichii (strain DSM 6014 / CCUG 31198 / JCM 15750 / NBRC 105917 / EY 4224 / RW1)</name>
    <name type="common">Sphingomonas wittichii</name>
    <dbReference type="NCBI Taxonomy" id="392499"/>
    <lineage>
        <taxon>Bacteria</taxon>
        <taxon>Pseudomonadati</taxon>
        <taxon>Pseudomonadota</taxon>
        <taxon>Alphaproteobacteria</taxon>
        <taxon>Sphingomonadales</taxon>
        <taxon>Sphingomonadaceae</taxon>
        <taxon>Rhizorhabdus</taxon>
    </lineage>
</organism>
<feature type="chain" id="PRO_0000340987" description="4-hydroxy-tetrahydrodipicolinate synthase">
    <location>
        <begin position="1"/>
        <end position="291"/>
    </location>
</feature>
<feature type="active site" description="Proton donor/acceptor" evidence="1">
    <location>
        <position position="132"/>
    </location>
</feature>
<feature type="active site" description="Schiff-base intermediate with substrate" evidence="1">
    <location>
        <position position="160"/>
    </location>
</feature>
<feature type="binding site" evidence="1">
    <location>
        <position position="44"/>
    </location>
    <ligand>
        <name>pyruvate</name>
        <dbReference type="ChEBI" id="CHEBI:15361"/>
    </ligand>
</feature>
<feature type="binding site" evidence="1">
    <location>
        <position position="202"/>
    </location>
    <ligand>
        <name>pyruvate</name>
        <dbReference type="ChEBI" id="CHEBI:15361"/>
    </ligand>
</feature>
<feature type="site" description="Part of a proton relay during catalysis" evidence="1">
    <location>
        <position position="43"/>
    </location>
</feature>
<feature type="site" description="Part of a proton relay during catalysis" evidence="1">
    <location>
        <position position="106"/>
    </location>
</feature>
<dbReference type="EC" id="4.3.3.7" evidence="1"/>
<dbReference type="EMBL" id="CP000699">
    <property type="protein sequence ID" value="ABQ66885.1"/>
    <property type="status" value="ALT_INIT"/>
    <property type="molecule type" value="Genomic_DNA"/>
</dbReference>
<dbReference type="SMR" id="A5V3L9"/>
<dbReference type="STRING" id="392499.Swit_0517"/>
<dbReference type="PaxDb" id="392499-Swit_0517"/>
<dbReference type="KEGG" id="swi:Swit_0517"/>
<dbReference type="eggNOG" id="COG0329">
    <property type="taxonomic scope" value="Bacteria"/>
</dbReference>
<dbReference type="HOGENOM" id="CLU_049343_7_0_5"/>
<dbReference type="OrthoDB" id="9782828at2"/>
<dbReference type="UniPathway" id="UPA00034">
    <property type="reaction ID" value="UER00017"/>
</dbReference>
<dbReference type="Proteomes" id="UP000001989">
    <property type="component" value="Chromosome"/>
</dbReference>
<dbReference type="GO" id="GO:0005829">
    <property type="term" value="C:cytosol"/>
    <property type="evidence" value="ECO:0007669"/>
    <property type="project" value="TreeGrafter"/>
</dbReference>
<dbReference type="GO" id="GO:0008840">
    <property type="term" value="F:4-hydroxy-tetrahydrodipicolinate synthase activity"/>
    <property type="evidence" value="ECO:0007669"/>
    <property type="project" value="UniProtKB-UniRule"/>
</dbReference>
<dbReference type="GO" id="GO:0019877">
    <property type="term" value="P:diaminopimelate biosynthetic process"/>
    <property type="evidence" value="ECO:0007669"/>
    <property type="project" value="UniProtKB-UniRule"/>
</dbReference>
<dbReference type="GO" id="GO:0009089">
    <property type="term" value="P:lysine biosynthetic process via diaminopimelate"/>
    <property type="evidence" value="ECO:0007669"/>
    <property type="project" value="UniProtKB-UniRule"/>
</dbReference>
<dbReference type="CDD" id="cd00950">
    <property type="entry name" value="DHDPS"/>
    <property type="match status" value="1"/>
</dbReference>
<dbReference type="Gene3D" id="3.20.20.70">
    <property type="entry name" value="Aldolase class I"/>
    <property type="match status" value="1"/>
</dbReference>
<dbReference type="HAMAP" id="MF_00418">
    <property type="entry name" value="DapA"/>
    <property type="match status" value="1"/>
</dbReference>
<dbReference type="InterPro" id="IPR013785">
    <property type="entry name" value="Aldolase_TIM"/>
</dbReference>
<dbReference type="InterPro" id="IPR005263">
    <property type="entry name" value="DapA"/>
</dbReference>
<dbReference type="InterPro" id="IPR002220">
    <property type="entry name" value="DapA-like"/>
</dbReference>
<dbReference type="InterPro" id="IPR020625">
    <property type="entry name" value="Schiff_base-form_aldolases_AS"/>
</dbReference>
<dbReference type="InterPro" id="IPR020624">
    <property type="entry name" value="Schiff_base-form_aldolases_CS"/>
</dbReference>
<dbReference type="NCBIfam" id="TIGR00674">
    <property type="entry name" value="dapA"/>
    <property type="match status" value="1"/>
</dbReference>
<dbReference type="PANTHER" id="PTHR12128:SF66">
    <property type="entry name" value="4-HYDROXY-2-OXOGLUTARATE ALDOLASE, MITOCHONDRIAL"/>
    <property type="match status" value="1"/>
</dbReference>
<dbReference type="PANTHER" id="PTHR12128">
    <property type="entry name" value="DIHYDRODIPICOLINATE SYNTHASE"/>
    <property type="match status" value="1"/>
</dbReference>
<dbReference type="Pfam" id="PF00701">
    <property type="entry name" value="DHDPS"/>
    <property type="match status" value="1"/>
</dbReference>
<dbReference type="PIRSF" id="PIRSF001365">
    <property type="entry name" value="DHDPS"/>
    <property type="match status" value="1"/>
</dbReference>
<dbReference type="PRINTS" id="PR00146">
    <property type="entry name" value="DHPICSNTHASE"/>
</dbReference>
<dbReference type="SMART" id="SM01130">
    <property type="entry name" value="DHDPS"/>
    <property type="match status" value="1"/>
</dbReference>
<dbReference type="SUPFAM" id="SSF51569">
    <property type="entry name" value="Aldolase"/>
    <property type="match status" value="1"/>
</dbReference>
<dbReference type="PROSITE" id="PS00665">
    <property type="entry name" value="DHDPS_1"/>
    <property type="match status" value="1"/>
</dbReference>
<dbReference type="PROSITE" id="PS00666">
    <property type="entry name" value="DHDPS_2"/>
    <property type="match status" value="1"/>
</dbReference>